<accession>P30557</accession>
<gene>
    <name type="primary">Ptger3</name>
    <name type="synonym">Ptgerep3</name>
</gene>
<comment type="function">
    <text evidence="5 6 7 8 9 10 11">Receptor for prostaglandin E2 (PGE2) (PubMed:1372606, PubMed:8223569, PubMed:8381413). Required for normal development of fever in response to pyrinogens, including IL1B, prostaglandin E2 and bacterial lipopolysaccharide (LPS) (PubMed:9751056). Required for normal potentiation of platelet aggregation by prostaglandin E2, and thus plays a role in the regulation of blood coagulation (PubMed:11535576). Required for increased HCO3(-) secretion in the duodenum in response to mucosal acidification, and thereby contributes to the protection of the mucosa against acid-induced ulceration (PubMed:10535876). Not required for normal kidney function, normal urine volume and osmolality (PubMed:9843913).</text>
</comment>
<comment type="function">
    <molecule>Isoform Alpha</molecule>
    <text evidence="7 8 9">Receptor for prostaglandin E2 (PGE2); ligand binding activates a signaling cascade via G(i) proteins that leads to inhibition of adenylate cyclase (PubMed:1372606, PubMed:8381413). Shows high agonist-independent constitutive inhibition of adenylate cyclase (PubMed:8223569).</text>
</comment>
<comment type="function">
    <molecule>Isoform Beta</molecule>
    <text evidence="8 9">Receptor for prostaglandin E2 (PGE2); ligand binding activates a signaling cascade via G(i) proteins that leads to inhibition of adenylate cyclase. Requires much higher ligand concentrations than isoform Alpha for activation (PubMed:8381413). Does not display agonist-independent constitutive inhibition of adenylate cyclase (PubMed:8223569).</text>
</comment>
<comment type="function">
    <molecule>Isoform Gamma</molecule>
    <text evidence="8">Receptor for prostaglandin E2 (PGE2); ligand binding can activate several distinct signaling cascades, resulting in activation or inhibition of adenylate cyclase.</text>
</comment>
<comment type="subunit">
    <text evidence="1">Interacts (via C-terminus) with MKLN1.</text>
</comment>
<comment type="subcellular location">
    <subcellularLocation>
        <location evidence="7 8 9">Cell membrane</location>
        <topology evidence="14">Multi-pass membrane protein</topology>
    </subcellularLocation>
</comment>
<comment type="alternative products">
    <event type="alternative splicing"/>
    <isoform>
        <id>P30557-1</id>
        <name>Alpha</name>
        <sequence type="displayed"/>
    </isoform>
    <isoform>
        <id>P30557-2</id>
        <name>Beta</name>
        <sequence type="described" ref="VSP_001940"/>
    </isoform>
    <isoform>
        <id>P30557-3</id>
        <name>Gamma</name>
        <sequence type="described" ref="VSP_001941"/>
    </isoform>
    <text evidence="7 8 9 14">Additional isoforms seem to exist (Probable). Isoforms have identical ligand binding properties but different coupling properties with G proteins: isoform Alpha and isoform Beta couple to G(i) proteins, whereas isoform Gamma couples to multiple G proteins, G(i) and G(s) (PubMed:1372606, PubMed:8223569, PubMed:8381413).</text>
</comment>
<comment type="tissue specificity">
    <text evidence="6 7">Detected in platelets (PubMed:11535576). Kidney, uterus, and mastocytoma cells, and in a lesser amount in brain, thymus, lung, heart, stomach and spleen (PubMed:1372606).</text>
</comment>
<comment type="PTM">
    <text>Ligand binding is affected by cAMP-dependent phosphorylation in brain membranes.</text>
</comment>
<comment type="disruption phenotype">
    <text evidence="5 6 10 11">No visible phenotype. Mice are born at the expected Mendelian rate. Females have normal fertility. Mutant mice have normal renal function, urine volume and urine osmolality (PubMed:9843913). Mutant mice fail to develop fever in response to pyrinogens, including IL1B, prostaglandin E2 and bacterial lipopolysaccharide (LPS) (PubMed:9751056). Mutant mice lack the normal potentiation of platelet aggregation by prostaglandin E2 and display prolonged bleeding times and decreased susceptibility to thromboembolism (PubMed:11535576). Mutant mice have normal basal levels of HCO3(-) secretion in the duodenum, but fail to respond to mucosal acidification by increased HCO3(-) secretion. Unlike wild-type, they have a high incidence of ulcers in response to mucosal acidification (PubMed:10535876).</text>
</comment>
<comment type="similarity">
    <text evidence="3">Belongs to the G-protein coupled receptor 1 family.</text>
</comment>
<sequence length="365" mass="40077">MASMWAPEHSAEAHSNLSSTTDDCGSVSVAFPITMMVTGFVGNALAMLLVSRSYRRRESKRKKSFLLCIGWLALTDLVGQLLTSPVVILVYLSQRRWEQLDPSGRLCTFFGLTMTVFGLSSLLVASAMAVERALAIRAPHWYASHMKTRATPVLLGVWLSVLAFALLPVLGVGRYSVQWPGTWCFISTGPAGNETDPAREPGSVAFASAFACLGLLALVVTFACNLATIKALVSRCRAKAAVSQSSAQWGRITTETAIQLMGIMCVLSVCWSPLLIMMLKMIFNQMSVEQCKTQMGKEKECNSFLIAVRLASLNQILDPWVYLLLRKILLRKFCQIRDHTNYASSSTSLPCPGSSALMWSDQLER</sequence>
<evidence type="ECO:0000250" key="1">
    <source>
        <dbReference type="UniProtKB" id="P34980"/>
    </source>
</evidence>
<evidence type="ECO:0000255" key="2"/>
<evidence type="ECO:0000255" key="3">
    <source>
        <dbReference type="PROSITE-ProRule" id="PRU00521"/>
    </source>
</evidence>
<evidence type="ECO:0000256" key="4">
    <source>
        <dbReference type="SAM" id="MobiDB-lite"/>
    </source>
</evidence>
<evidence type="ECO:0000269" key="5">
    <source>
    </source>
</evidence>
<evidence type="ECO:0000269" key="6">
    <source>
    </source>
</evidence>
<evidence type="ECO:0000269" key="7">
    <source>
    </source>
</evidence>
<evidence type="ECO:0000269" key="8">
    <source>
    </source>
</evidence>
<evidence type="ECO:0000269" key="9">
    <source>
    </source>
</evidence>
<evidence type="ECO:0000269" key="10">
    <source>
    </source>
</evidence>
<evidence type="ECO:0000269" key="11">
    <source>
    </source>
</evidence>
<evidence type="ECO:0000303" key="12">
    <source>
    </source>
</evidence>
<evidence type="ECO:0000303" key="13">
    <source>
    </source>
</evidence>
<evidence type="ECO:0000305" key="14"/>
<reference key="1">
    <citation type="journal article" date="1992" name="J. Biol. Chem.">
        <title>Cloning and expression of a cDNA for mouse prostaglandin E receptor EP3 subtype.</title>
        <authorList>
            <person name="Sugimoto Y."/>
            <person name="Namba T."/>
            <person name="Honda A."/>
            <person name="Hayashi Y."/>
            <person name="Negishi M."/>
            <person name="Ichikawa A."/>
            <person name="Narumiya S."/>
        </authorList>
    </citation>
    <scope>NUCLEOTIDE SEQUENCE [MRNA] (ISOFORM ALPHA)</scope>
    <scope>FUNCTION</scope>
    <scope>SUBCELLULAR LOCATION</scope>
    <scope>TISSUE SPECIFICITY</scope>
    <source>
        <strain>BDF1</strain>
    </source>
</reference>
<reference key="2">
    <citation type="journal article" date="1993" name="J. Biol. Chem.">
        <title>Two isoforms of the EP3 receptor with different carboxyl-terminal domains. Identical ligand binding properties and different coupling properties with Gi proteins.</title>
        <authorList>
            <person name="Sugimoto Y."/>
            <person name="Negishi M."/>
            <person name="Hayashi Y."/>
            <person name="Namba T."/>
            <person name="Honda A."/>
            <person name="Watabe A."/>
            <person name="Hirata M."/>
            <person name="Narumiya S."/>
            <person name="Ichikawa A."/>
        </authorList>
    </citation>
    <scope>NUCLEOTIDE SEQUENCE [MRNA] (ISOFORM BETA)</scope>
    <scope>FUNCTION</scope>
    <scope>SUBCELLULAR LOCATION</scope>
</reference>
<reference key="3">
    <citation type="journal article" date="1993" name="Eur. J. Biochem.">
        <title>Third isoform of the prostaglandin-E-receptor EP3 subtype with different C-terminal tail coupling to both stimulation and inhibition of adenylate cyclase.</title>
        <authorList>
            <person name="Irie A."/>
            <person name="Sugimoto Y."/>
            <person name="Namba T."/>
            <person name="Harazono A."/>
            <person name="Honda A."/>
            <person name="Watabe A."/>
            <person name="Negishi M."/>
            <person name="Narumiya S."/>
            <person name="Ichikawa A."/>
        </authorList>
    </citation>
    <scope>NUCLEOTIDE SEQUENCE [MRNA] (ISOFORM GAMMA)</scope>
    <scope>FUNCTION</scope>
    <scope>SUBCELLULAR LOCATION</scope>
</reference>
<reference key="4">
    <citation type="journal article" date="1996" name="J. Biol. Chem.">
        <title>Two isoforms of the prostaglandin E receptor EP3 subtype different in agonist-independent constitutive activity.</title>
        <authorList>
            <person name="Hasegawa H."/>
            <person name="Negishi M."/>
            <person name="Ichikawa A."/>
        </authorList>
    </citation>
    <scope>CHARACTERIZATION (ISOFORMS ALPHA AND BETA)</scope>
    <scope>FUNCTION</scope>
</reference>
<reference key="5">
    <citation type="journal article" date="1998" name="Am. J. Physiol.">
        <title>Urinary concentrating function in mice lacking EP3 receptors for prostaglandin E2.</title>
        <authorList>
            <person name="Fleming E.F."/>
            <person name="Athirakul K."/>
            <person name="Oliverio M.I."/>
            <person name="Key M."/>
            <person name="Goulet J."/>
            <person name="Koller B.H."/>
            <person name="Coffman T.M."/>
        </authorList>
    </citation>
    <scope>DISRUPTION PHENOTYPE</scope>
    <scope>FUNCTION</scope>
</reference>
<reference key="6">
    <citation type="journal article" date="1998" name="Nature">
        <title>Impaired febrile response in mice lacking the prostaglandin E receptor subtype EP3.</title>
        <authorList>
            <person name="Ushikubi F."/>
            <person name="Segi E."/>
            <person name="Sugimoto Y."/>
            <person name="Murata T."/>
            <person name="Matsuoka T."/>
            <person name="Kobayashi T."/>
            <person name="Hizaki H."/>
            <person name="Tuboi K."/>
            <person name="Katsuyama M."/>
            <person name="Ichikawa A."/>
            <person name="Tanaka T."/>
            <person name="Yoshida N."/>
            <person name="Narumiya S."/>
        </authorList>
    </citation>
    <scope>DISRUPTION PHENOTYPE</scope>
    <scope>FUNCTION</scope>
</reference>
<reference key="7">
    <citation type="journal article" date="1999" name="Gastroenterology">
        <title>Impaired duodenal bicarbonate secretion and mucosal integrity in mice lacking prostaglandin E-receptor subtype EP(3).</title>
        <authorList>
            <person name="Takeuchi K."/>
            <person name="Ukawa H."/>
            <person name="Kato S."/>
            <person name="Furukawa O."/>
            <person name="Araki H."/>
            <person name="Sugimoto Y."/>
            <person name="Ichikawa A."/>
            <person name="Ushikubi F."/>
            <person name="Narumiya S."/>
        </authorList>
    </citation>
    <scope>DISRUPTION PHENOTYPE</scope>
    <scope>FUNCTION</scope>
</reference>
<reference key="8">
    <citation type="journal article" date="2001" name="Circulation">
        <title>Increased bleeding tendency and decreased susceptibility to thromboembolism in mice lacking the prostaglandin E receptor subtype EP(3).</title>
        <authorList>
            <person name="Ma H."/>
            <person name="Hara A."/>
            <person name="Xiao C.Y."/>
            <person name="Okada Y."/>
            <person name="Takahata O."/>
            <person name="Nakaya K."/>
            <person name="Sugimoto Y."/>
            <person name="Ichikawa A."/>
            <person name="Narumiya S."/>
            <person name="Ushikubi F."/>
        </authorList>
    </citation>
    <scope>DISRUPTION PHENOTYPE</scope>
    <scope>FUNCTION</scope>
    <scope>TISSUE SPECIFICITY</scope>
</reference>
<dbReference type="EMBL" id="D10204">
    <property type="protein sequence ID" value="BAA01051.1"/>
    <property type="molecule type" value="mRNA"/>
</dbReference>
<dbReference type="EMBL" id="D13321">
    <property type="protein sequence ID" value="BAA02578.1"/>
    <property type="molecule type" value="mRNA"/>
</dbReference>
<dbReference type="EMBL" id="D17406">
    <property type="protein sequence ID" value="BAA04229.1"/>
    <property type="molecule type" value="mRNA"/>
</dbReference>
<dbReference type="PIR" id="A42414">
    <property type="entry name" value="A42414"/>
</dbReference>
<dbReference type="PIR" id="A45211">
    <property type="entry name" value="A45211"/>
</dbReference>
<dbReference type="PIR" id="S65009">
    <property type="entry name" value="S65009"/>
</dbReference>
<dbReference type="SMR" id="P30557"/>
<dbReference type="CORUM" id="P30557"/>
<dbReference type="FunCoup" id="P30557">
    <property type="interactions" value="306"/>
</dbReference>
<dbReference type="STRING" id="10090.ENSMUSP00000043302"/>
<dbReference type="BindingDB" id="P30557"/>
<dbReference type="ChEMBL" id="CHEMBL4336"/>
<dbReference type="DrugCentral" id="P30557"/>
<dbReference type="GuidetoPHARMACOLOGY" id="342"/>
<dbReference type="GlyCosmos" id="P30557">
    <property type="glycosylation" value="2 sites, No reported glycans"/>
</dbReference>
<dbReference type="GlyGen" id="P30557">
    <property type="glycosylation" value="2 sites"/>
</dbReference>
<dbReference type="iPTMnet" id="P30557"/>
<dbReference type="PhosphoSitePlus" id="P30557"/>
<dbReference type="PaxDb" id="10090-ENSMUSP00000043302"/>
<dbReference type="ProteomicsDB" id="287908">
    <molecule id="P30557-1"/>
</dbReference>
<dbReference type="ProteomicsDB" id="287909">
    <molecule id="P30557-2"/>
</dbReference>
<dbReference type="ProteomicsDB" id="287910">
    <molecule id="P30557-3"/>
</dbReference>
<dbReference type="AGR" id="MGI:97795"/>
<dbReference type="MGI" id="MGI:97795">
    <property type="gene designation" value="Ptger3"/>
</dbReference>
<dbReference type="eggNOG" id="KOG3656">
    <property type="taxonomic scope" value="Eukaryota"/>
</dbReference>
<dbReference type="InParanoid" id="P30557"/>
<dbReference type="PhylomeDB" id="P30557"/>
<dbReference type="Reactome" id="R-MMU-391908">
    <property type="pathway name" value="Prostanoid ligand receptors"/>
</dbReference>
<dbReference type="Reactome" id="R-MMU-418594">
    <property type="pathway name" value="G alpha (i) signalling events"/>
</dbReference>
<dbReference type="ChiTaRS" id="Ptger3">
    <property type="organism name" value="mouse"/>
</dbReference>
<dbReference type="PRO" id="PR:P30557"/>
<dbReference type="Proteomes" id="UP000000589">
    <property type="component" value="Unplaced"/>
</dbReference>
<dbReference type="RNAct" id="P30557">
    <property type="molecule type" value="protein"/>
</dbReference>
<dbReference type="GO" id="GO:0005886">
    <property type="term" value="C:plasma membrane"/>
    <property type="evidence" value="ECO:0000314"/>
    <property type="project" value="MGI"/>
</dbReference>
<dbReference type="GO" id="GO:0004957">
    <property type="term" value="F:prostaglandin E receptor activity"/>
    <property type="evidence" value="ECO:0000314"/>
    <property type="project" value="MGI"/>
</dbReference>
<dbReference type="GO" id="GO:0007188">
    <property type="term" value="P:adenylate cyclase-modulating G protein-coupled receptor signaling pathway"/>
    <property type="evidence" value="ECO:0000314"/>
    <property type="project" value="MGI"/>
</dbReference>
<dbReference type="GO" id="GO:0015701">
    <property type="term" value="P:bicarbonate transport"/>
    <property type="evidence" value="ECO:0000315"/>
    <property type="project" value="MGI"/>
</dbReference>
<dbReference type="GO" id="GO:0001660">
    <property type="term" value="P:fever generation"/>
    <property type="evidence" value="ECO:0000314"/>
    <property type="project" value="MGI"/>
</dbReference>
<dbReference type="GO" id="GO:0007200">
    <property type="term" value="P:phospholipase C-activating G protein-coupled receptor signaling pathway"/>
    <property type="evidence" value="ECO:0000314"/>
    <property type="project" value="MGI"/>
</dbReference>
<dbReference type="GO" id="GO:0007204">
    <property type="term" value="P:positive regulation of cytosolic calcium ion concentration"/>
    <property type="evidence" value="ECO:0000314"/>
    <property type="project" value="MGI"/>
</dbReference>
<dbReference type="GO" id="GO:0031622">
    <property type="term" value="P:positive regulation of fever generation"/>
    <property type="evidence" value="ECO:0000315"/>
    <property type="project" value="BHF-UCL"/>
</dbReference>
<dbReference type="GO" id="GO:1902895">
    <property type="term" value="P:positive regulation of miRNA transcription"/>
    <property type="evidence" value="ECO:0000314"/>
    <property type="project" value="MGI"/>
</dbReference>
<dbReference type="GO" id="GO:0035810">
    <property type="term" value="P:positive regulation of urine volume"/>
    <property type="evidence" value="ECO:0000315"/>
    <property type="project" value="MGI"/>
</dbReference>
<dbReference type="GO" id="GO:0032496">
    <property type="term" value="P:response to lipopolysaccharide"/>
    <property type="evidence" value="ECO:0000315"/>
    <property type="project" value="MGI"/>
</dbReference>
<dbReference type="FunFam" id="1.20.1070.10:FF:000087">
    <property type="entry name" value="prostaglandin E2 receptor EP3 subtype"/>
    <property type="match status" value="1"/>
</dbReference>
<dbReference type="Gene3D" id="1.20.1070.10">
    <property type="entry name" value="Rhodopsin 7-helix transmembrane proteins"/>
    <property type="match status" value="1"/>
</dbReference>
<dbReference type="InterPro" id="IPR000154">
    <property type="entry name" value="EP3_rcpt_3"/>
</dbReference>
<dbReference type="InterPro" id="IPR000276">
    <property type="entry name" value="GPCR_Rhodpsn"/>
</dbReference>
<dbReference type="InterPro" id="IPR017452">
    <property type="entry name" value="GPCR_Rhodpsn_7TM"/>
</dbReference>
<dbReference type="InterPro" id="IPR008365">
    <property type="entry name" value="Prostanoid_rcpt"/>
</dbReference>
<dbReference type="InterPro" id="IPR001244">
    <property type="entry name" value="Prostglndn_DP_rcpt"/>
</dbReference>
<dbReference type="InterPro" id="IPR000265">
    <property type="entry name" value="Prostglndn_EP3_rcpt"/>
</dbReference>
<dbReference type="PANTHER" id="PTHR11866">
    <property type="entry name" value="G-PROTEIN COUPLED RECEPTOR FAMILY 1 MEMBER"/>
    <property type="match status" value="1"/>
</dbReference>
<dbReference type="PANTHER" id="PTHR11866:SF10">
    <property type="entry name" value="PROSTAGLANDIN E2 RECEPTOR EP3 SUBTYPE"/>
    <property type="match status" value="1"/>
</dbReference>
<dbReference type="Pfam" id="PF00001">
    <property type="entry name" value="7tm_1"/>
    <property type="match status" value="1"/>
</dbReference>
<dbReference type="PRINTS" id="PR00237">
    <property type="entry name" value="GPCRRHODOPSN"/>
</dbReference>
<dbReference type="PRINTS" id="PR00428">
    <property type="entry name" value="PROSTAGLNDNR"/>
</dbReference>
<dbReference type="PRINTS" id="PR01788">
    <property type="entry name" value="PROSTANOIDR"/>
</dbReference>
<dbReference type="PRINTS" id="PR00585">
    <property type="entry name" value="PRSTNOIDE33R"/>
</dbReference>
<dbReference type="PRINTS" id="PR00582">
    <property type="entry name" value="PRSTNOIDEP3R"/>
</dbReference>
<dbReference type="SUPFAM" id="SSF81321">
    <property type="entry name" value="Family A G protein-coupled receptor-like"/>
    <property type="match status" value="1"/>
</dbReference>
<dbReference type="PROSITE" id="PS50262">
    <property type="entry name" value="G_PROTEIN_RECEP_F1_2"/>
    <property type="match status" value="1"/>
</dbReference>
<protein>
    <recommendedName>
        <fullName>Prostaglandin E2 receptor EP3 subtype</fullName>
        <shortName>PGE receptor EP3 subtype</shortName>
        <shortName>PGE2 receptor EP3 subtype</shortName>
    </recommendedName>
    <alternativeName>
        <fullName>Prostanoid EP3 receptor</fullName>
    </alternativeName>
</protein>
<feature type="chain" id="PRO_0000070059" description="Prostaglandin E2 receptor EP3 subtype">
    <location>
        <begin position="1"/>
        <end position="365"/>
    </location>
</feature>
<feature type="topological domain" description="Extracellular" evidence="2">
    <location>
        <begin position="1"/>
        <end position="30"/>
    </location>
</feature>
<feature type="transmembrane region" description="Helical; Name=1" evidence="2">
    <location>
        <begin position="31"/>
        <end position="55"/>
    </location>
</feature>
<feature type="topological domain" description="Cytoplasmic" evidence="2">
    <location>
        <begin position="56"/>
        <end position="68"/>
    </location>
</feature>
<feature type="transmembrane region" description="Helical; Name=2" evidence="2">
    <location>
        <begin position="69"/>
        <end position="89"/>
    </location>
</feature>
<feature type="topological domain" description="Extracellular" evidence="2">
    <location>
        <begin position="90"/>
        <end position="108"/>
    </location>
</feature>
<feature type="transmembrane region" description="Helical; Name=3" evidence="2">
    <location>
        <begin position="109"/>
        <end position="130"/>
    </location>
</feature>
<feature type="topological domain" description="Cytoplasmic" evidence="2">
    <location>
        <begin position="131"/>
        <end position="151"/>
    </location>
</feature>
<feature type="transmembrane region" description="Helical; Name=4" evidence="2">
    <location>
        <begin position="152"/>
        <end position="173"/>
    </location>
</feature>
<feature type="topological domain" description="Extracellular" evidence="2">
    <location>
        <begin position="174"/>
        <end position="203"/>
    </location>
</feature>
<feature type="transmembrane region" description="Helical; Name=5" evidence="2">
    <location>
        <begin position="204"/>
        <end position="229"/>
    </location>
</feature>
<feature type="topological domain" description="Cytoplasmic" evidence="2">
    <location>
        <begin position="230"/>
        <end position="259"/>
    </location>
</feature>
<feature type="transmembrane region" description="Helical; Name=6" evidence="2">
    <location>
        <begin position="260"/>
        <end position="283"/>
    </location>
</feature>
<feature type="topological domain" description="Extracellular" evidence="2">
    <location>
        <begin position="284"/>
        <end position="303"/>
    </location>
</feature>
<feature type="transmembrane region" description="Helical; Name=7" evidence="2">
    <location>
        <begin position="304"/>
        <end position="325"/>
    </location>
</feature>
<feature type="topological domain" description="Cytoplasmic" evidence="2">
    <location>
        <begin position="326"/>
        <end position="365"/>
    </location>
</feature>
<feature type="region of interest" description="Disordered" evidence="4">
    <location>
        <begin position="1"/>
        <end position="22"/>
    </location>
</feature>
<feature type="compositionally biased region" description="Polar residues" evidence="4">
    <location>
        <begin position="13"/>
        <end position="22"/>
    </location>
</feature>
<feature type="glycosylation site" description="N-linked (GlcNAc...) asparagine" evidence="2">
    <location>
        <position position="16"/>
    </location>
</feature>
<feature type="glycosylation site" description="N-linked (GlcNAc...) asparagine" evidence="2">
    <location>
        <position position="193"/>
    </location>
</feature>
<feature type="disulfide bond" evidence="3">
    <location>
        <begin position="107"/>
        <end position="184"/>
    </location>
</feature>
<feature type="splice variant" id="VSP_001940" description="In isoform Beta." evidence="13">
    <original>IRDHTNYASSSTSLPCPGSSALMWSDQLER</original>
    <variation>MMNNLKWTFIAVPVSLGLRISSPREG</variation>
    <location>
        <begin position="336"/>
        <end position="365"/>
    </location>
</feature>
<feature type="splice variant" id="VSP_001941" description="In isoform Gamma." evidence="12">
    <original>IRDHTNYASSSTSLPCPGSSALMWSDQLER</original>
    <variation>VANAVSSCSSDGQKGQAISLSNEVVQPGP</variation>
    <location>
        <begin position="336"/>
        <end position="365"/>
    </location>
</feature>
<keyword id="KW-0025">Alternative splicing</keyword>
<keyword id="KW-1003">Cell membrane</keyword>
<keyword id="KW-1015">Disulfide bond</keyword>
<keyword id="KW-0297">G-protein coupled receptor</keyword>
<keyword id="KW-0325">Glycoprotein</keyword>
<keyword id="KW-0449">Lipoprotein</keyword>
<keyword id="KW-0472">Membrane</keyword>
<keyword id="KW-0564">Palmitate</keyword>
<keyword id="KW-0597">Phosphoprotein</keyword>
<keyword id="KW-0675">Receptor</keyword>
<keyword id="KW-1185">Reference proteome</keyword>
<keyword id="KW-0807">Transducer</keyword>
<keyword id="KW-0812">Transmembrane</keyword>
<keyword id="KW-1133">Transmembrane helix</keyword>
<name>PE2R3_MOUSE</name>
<proteinExistence type="evidence at protein level"/>
<organism>
    <name type="scientific">Mus musculus</name>
    <name type="common">Mouse</name>
    <dbReference type="NCBI Taxonomy" id="10090"/>
    <lineage>
        <taxon>Eukaryota</taxon>
        <taxon>Metazoa</taxon>
        <taxon>Chordata</taxon>
        <taxon>Craniata</taxon>
        <taxon>Vertebrata</taxon>
        <taxon>Euteleostomi</taxon>
        <taxon>Mammalia</taxon>
        <taxon>Eutheria</taxon>
        <taxon>Euarchontoglires</taxon>
        <taxon>Glires</taxon>
        <taxon>Rodentia</taxon>
        <taxon>Myomorpha</taxon>
        <taxon>Muroidea</taxon>
        <taxon>Muridae</taxon>
        <taxon>Murinae</taxon>
        <taxon>Mus</taxon>
        <taxon>Mus</taxon>
    </lineage>
</organism>